<organism>
    <name type="scientific">Xenopus tropicalis</name>
    <name type="common">Western clawed frog</name>
    <name type="synonym">Silurana tropicalis</name>
    <dbReference type="NCBI Taxonomy" id="8364"/>
    <lineage>
        <taxon>Eukaryota</taxon>
        <taxon>Metazoa</taxon>
        <taxon>Chordata</taxon>
        <taxon>Craniata</taxon>
        <taxon>Vertebrata</taxon>
        <taxon>Euteleostomi</taxon>
        <taxon>Amphibia</taxon>
        <taxon>Batrachia</taxon>
        <taxon>Anura</taxon>
        <taxon>Pipoidea</taxon>
        <taxon>Pipidae</taxon>
        <taxon>Xenopodinae</taxon>
        <taxon>Xenopus</taxon>
        <taxon>Silurana</taxon>
    </lineage>
</organism>
<sequence length="153" mass="16841">MSARISKQLRLSVPPCLANRTTASNSSSCVTEVEPLLQSFSSTLVLIVLATVIFCLVVLSLSTFHMHKSKMKKRKIEKAQEEYERDHCSPKAERGHLHGMGRGGTHGSPTSPTIQRKEHIRLDLGASVNEEPQLEASGLDRATEHLQQSVVLS</sequence>
<feature type="signal peptide" evidence="1">
    <location>
        <begin position="1"/>
        <end position="18"/>
    </location>
</feature>
<feature type="chain" id="PRO_0000320200" description="Uncharacterized protein C11orf87 homolog">
    <location>
        <begin position="19"/>
        <end position="153"/>
    </location>
</feature>
<feature type="topological domain" description="Extracellular" evidence="1">
    <location>
        <begin position="19"/>
        <end position="43"/>
    </location>
</feature>
<feature type="transmembrane region" description="Helical" evidence="1">
    <location>
        <begin position="44"/>
        <end position="64"/>
    </location>
</feature>
<feature type="topological domain" description="Cytoplasmic" evidence="1">
    <location>
        <begin position="65"/>
        <end position="153"/>
    </location>
</feature>
<feature type="region of interest" description="Disordered" evidence="2">
    <location>
        <begin position="75"/>
        <end position="115"/>
    </location>
</feature>
<feature type="compositionally biased region" description="Basic and acidic residues" evidence="2">
    <location>
        <begin position="77"/>
        <end position="96"/>
    </location>
</feature>
<feature type="glycosylation site" description="N-linked (GlcNAc...) asparagine" evidence="1">
    <location>
        <position position="19"/>
    </location>
</feature>
<feature type="glycosylation site" description="N-linked (GlcNAc...) asparagine" evidence="1">
    <location>
        <position position="25"/>
    </location>
</feature>
<protein>
    <recommendedName>
        <fullName>Uncharacterized protein C11orf87 homolog</fullName>
    </recommendedName>
</protein>
<accession>Q0VFL4</accession>
<dbReference type="EMBL" id="BC118785">
    <property type="protein sequence ID" value="AAI18786.1"/>
    <property type="molecule type" value="mRNA"/>
</dbReference>
<dbReference type="RefSeq" id="NP_001072777.1">
    <property type="nucleotide sequence ID" value="NM_001079309.1"/>
</dbReference>
<dbReference type="SMR" id="Q0VFL4"/>
<dbReference type="FunCoup" id="Q0VFL4">
    <property type="interactions" value="54"/>
</dbReference>
<dbReference type="PaxDb" id="8364-ENSXETP00000052241"/>
<dbReference type="DNASU" id="780237"/>
<dbReference type="GeneID" id="780237"/>
<dbReference type="KEGG" id="xtr:780237"/>
<dbReference type="AGR" id="Xenbase:XB-GENE-5746920"/>
<dbReference type="CTD" id="780237"/>
<dbReference type="Xenbase" id="XB-GENE-5746920">
    <property type="gene designation" value="c2h11orf87"/>
</dbReference>
<dbReference type="eggNOG" id="ENOG502S981">
    <property type="taxonomic scope" value="Eukaryota"/>
</dbReference>
<dbReference type="HOGENOM" id="CLU_074982_0_0_1"/>
<dbReference type="InParanoid" id="Q0VFL4"/>
<dbReference type="OMA" id="PPCLANR"/>
<dbReference type="OrthoDB" id="9943854at2759"/>
<dbReference type="PhylomeDB" id="Q0VFL4"/>
<dbReference type="TreeFam" id="TF336990"/>
<dbReference type="Proteomes" id="UP000008143">
    <property type="component" value="Chromosome 2"/>
</dbReference>
<dbReference type="Bgee" id="ENSXETG00000007649">
    <property type="expression patterns" value="Expressed in brain and 4 other cell types or tissues"/>
</dbReference>
<dbReference type="GO" id="GO:0016020">
    <property type="term" value="C:membrane"/>
    <property type="evidence" value="ECO:0007669"/>
    <property type="project" value="UniProtKB-SubCell"/>
</dbReference>
<dbReference type="InterPro" id="IPR037670">
    <property type="entry name" value="C11orf87"/>
</dbReference>
<dbReference type="PANTHER" id="PTHR31870:SF2">
    <property type="entry name" value="CHROMOSOME 11 OPEN READING FRAME 87"/>
    <property type="match status" value="1"/>
</dbReference>
<dbReference type="PANTHER" id="PTHR31870">
    <property type="entry name" value="SI:DKEY-183I3.9-RELATED"/>
    <property type="match status" value="1"/>
</dbReference>
<keyword id="KW-0325">Glycoprotein</keyword>
<keyword id="KW-0472">Membrane</keyword>
<keyword id="KW-1185">Reference proteome</keyword>
<keyword id="KW-0732">Signal</keyword>
<keyword id="KW-0812">Transmembrane</keyword>
<keyword id="KW-1133">Transmembrane helix</keyword>
<name>CK087_XENTR</name>
<evidence type="ECO:0000255" key="1"/>
<evidence type="ECO:0000256" key="2">
    <source>
        <dbReference type="SAM" id="MobiDB-lite"/>
    </source>
</evidence>
<evidence type="ECO:0000305" key="3"/>
<proteinExistence type="evidence at transcript level"/>
<comment type="subcellular location">
    <subcellularLocation>
        <location evidence="3">Membrane</location>
        <topology evidence="3">Single-pass type I membrane protein</topology>
    </subcellularLocation>
</comment>
<reference key="1">
    <citation type="submission" date="2006-07" db="EMBL/GenBank/DDBJ databases">
        <authorList>
            <consortium name="NIH - Xenopus Gene Collection (XGC) project"/>
        </authorList>
    </citation>
    <scope>NUCLEOTIDE SEQUENCE [LARGE SCALE MRNA]</scope>
    <source>
        <tissue>Brain</tissue>
    </source>
</reference>